<organism>
    <name type="scientific">Pseudomonas putida (strain W619)</name>
    <dbReference type="NCBI Taxonomy" id="390235"/>
    <lineage>
        <taxon>Bacteria</taxon>
        <taxon>Pseudomonadati</taxon>
        <taxon>Pseudomonadota</taxon>
        <taxon>Gammaproteobacteria</taxon>
        <taxon>Pseudomonadales</taxon>
        <taxon>Pseudomonadaceae</taxon>
        <taxon>Pseudomonas</taxon>
    </lineage>
</organism>
<evidence type="ECO:0000255" key="1">
    <source>
        <dbReference type="HAMAP-Rule" id="MF_00649"/>
    </source>
</evidence>
<evidence type="ECO:0000256" key="2">
    <source>
        <dbReference type="SAM" id="MobiDB-lite"/>
    </source>
</evidence>
<gene>
    <name evidence="1" type="primary">yacG</name>
    <name type="ordered locus">PputW619_4540</name>
</gene>
<comment type="function">
    <text evidence="1">Inhibits all the catalytic activities of DNA gyrase by preventing its interaction with DNA. Acts by binding directly to the C-terminal domain of GyrB, which probably disrupts DNA binding by the gyrase.</text>
</comment>
<comment type="cofactor">
    <cofactor evidence="1">
        <name>Zn(2+)</name>
        <dbReference type="ChEBI" id="CHEBI:29105"/>
    </cofactor>
    <text evidence="1">Binds 1 zinc ion.</text>
</comment>
<comment type="subunit">
    <text evidence="1">Interacts with GyrB.</text>
</comment>
<comment type="similarity">
    <text evidence="1">Belongs to the DNA gyrase inhibitor YacG family.</text>
</comment>
<name>YACG_PSEPW</name>
<sequence length="66" mass="7323">MSQPLTVDCPTCGAPVEWDAKNAFRPFCSDRCKLIDLGAWAAEEHKIAGSQESEDELYSGDLEPRH</sequence>
<reference key="1">
    <citation type="submission" date="2008-02" db="EMBL/GenBank/DDBJ databases">
        <title>Complete sequence of Pseudomonas putida W619.</title>
        <authorList>
            <person name="Copeland A."/>
            <person name="Lucas S."/>
            <person name="Lapidus A."/>
            <person name="Barry K."/>
            <person name="Detter J.C."/>
            <person name="Glavina del Rio T."/>
            <person name="Dalin E."/>
            <person name="Tice H."/>
            <person name="Pitluck S."/>
            <person name="Chain P."/>
            <person name="Malfatti S."/>
            <person name="Shin M."/>
            <person name="Vergez L."/>
            <person name="Schmutz J."/>
            <person name="Larimer F."/>
            <person name="Land M."/>
            <person name="Hauser L."/>
            <person name="Kyrpides N."/>
            <person name="Kim E."/>
            <person name="Taghavi S."/>
            <person name="Vangronsveld D."/>
            <person name="van der Lelie D."/>
            <person name="Richardson P."/>
        </authorList>
    </citation>
    <scope>NUCLEOTIDE SEQUENCE [LARGE SCALE GENOMIC DNA]</scope>
    <source>
        <strain>W619</strain>
    </source>
</reference>
<dbReference type="EMBL" id="CP000949">
    <property type="protein sequence ID" value="ACA75020.1"/>
    <property type="molecule type" value="Genomic_DNA"/>
</dbReference>
<dbReference type="SMR" id="B1JF64"/>
<dbReference type="STRING" id="390235.PputW619_4540"/>
<dbReference type="KEGG" id="ppw:PputW619_4540"/>
<dbReference type="eggNOG" id="COG3024">
    <property type="taxonomic scope" value="Bacteria"/>
</dbReference>
<dbReference type="HOGENOM" id="CLU_178280_3_2_6"/>
<dbReference type="OrthoDB" id="9809663at2"/>
<dbReference type="GO" id="GO:0008657">
    <property type="term" value="F:DNA topoisomerase type II (double strand cut, ATP-hydrolyzing) inhibitor activity"/>
    <property type="evidence" value="ECO:0007669"/>
    <property type="project" value="UniProtKB-UniRule"/>
</dbReference>
<dbReference type="GO" id="GO:0008270">
    <property type="term" value="F:zinc ion binding"/>
    <property type="evidence" value="ECO:0007669"/>
    <property type="project" value="UniProtKB-UniRule"/>
</dbReference>
<dbReference type="GO" id="GO:0006355">
    <property type="term" value="P:regulation of DNA-templated transcription"/>
    <property type="evidence" value="ECO:0007669"/>
    <property type="project" value="InterPro"/>
</dbReference>
<dbReference type="Gene3D" id="3.30.50.10">
    <property type="entry name" value="Erythroid Transcription Factor GATA-1, subunit A"/>
    <property type="match status" value="1"/>
</dbReference>
<dbReference type="HAMAP" id="MF_00649">
    <property type="entry name" value="DNA_gyrase_inhibitor_YacG"/>
    <property type="match status" value="1"/>
</dbReference>
<dbReference type="InterPro" id="IPR005584">
    <property type="entry name" value="DNA_gyrase_inhibitor_YacG"/>
</dbReference>
<dbReference type="InterPro" id="IPR013088">
    <property type="entry name" value="Znf_NHR/GATA"/>
</dbReference>
<dbReference type="NCBIfam" id="NF001638">
    <property type="entry name" value="PRK00418.1"/>
    <property type="match status" value="1"/>
</dbReference>
<dbReference type="PANTHER" id="PTHR36150">
    <property type="entry name" value="DNA GYRASE INHIBITOR YACG"/>
    <property type="match status" value="1"/>
</dbReference>
<dbReference type="PANTHER" id="PTHR36150:SF1">
    <property type="entry name" value="DNA GYRASE INHIBITOR YACG"/>
    <property type="match status" value="1"/>
</dbReference>
<dbReference type="Pfam" id="PF03884">
    <property type="entry name" value="YacG"/>
    <property type="match status" value="1"/>
</dbReference>
<dbReference type="SUPFAM" id="SSF57716">
    <property type="entry name" value="Glucocorticoid receptor-like (DNA-binding domain)"/>
    <property type="match status" value="1"/>
</dbReference>
<feature type="chain" id="PRO_1000130969" description="DNA gyrase inhibitor YacG">
    <location>
        <begin position="1"/>
        <end position="66"/>
    </location>
</feature>
<feature type="region of interest" description="Disordered" evidence="2">
    <location>
        <begin position="45"/>
        <end position="66"/>
    </location>
</feature>
<feature type="binding site" evidence="1">
    <location>
        <position position="9"/>
    </location>
    <ligand>
        <name>Zn(2+)</name>
        <dbReference type="ChEBI" id="CHEBI:29105"/>
    </ligand>
</feature>
<feature type="binding site" evidence="1">
    <location>
        <position position="12"/>
    </location>
    <ligand>
        <name>Zn(2+)</name>
        <dbReference type="ChEBI" id="CHEBI:29105"/>
    </ligand>
</feature>
<feature type="binding site" evidence="1">
    <location>
        <position position="28"/>
    </location>
    <ligand>
        <name>Zn(2+)</name>
        <dbReference type="ChEBI" id="CHEBI:29105"/>
    </ligand>
</feature>
<feature type="binding site" evidence="1">
    <location>
        <position position="32"/>
    </location>
    <ligand>
        <name>Zn(2+)</name>
        <dbReference type="ChEBI" id="CHEBI:29105"/>
    </ligand>
</feature>
<accession>B1JF64</accession>
<keyword id="KW-0479">Metal-binding</keyword>
<keyword id="KW-0862">Zinc</keyword>
<proteinExistence type="inferred from homology"/>
<protein>
    <recommendedName>
        <fullName evidence="1">DNA gyrase inhibitor YacG</fullName>
    </recommendedName>
</protein>